<feature type="chain" id="PRO_1000190821" description="Elongation factor 4">
    <location>
        <begin position="1"/>
        <end position="646"/>
    </location>
</feature>
<feature type="domain" description="tr-type G">
    <location>
        <begin position="42"/>
        <end position="227"/>
    </location>
</feature>
<feature type="binding site" evidence="1">
    <location>
        <begin position="54"/>
        <end position="59"/>
    </location>
    <ligand>
        <name>GTP</name>
        <dbReference type="ChEBI" id="CHEBI:37565"/>
    </ligand>
</feature>
<feature type="binding site" evidence="1">
    <location>
        <begin position="174"/>
        <end position="177"/>
    </location>
    <ligand>
        <name>GTP</name>
        <dbReference type="ChEBI" id="CHEBI:37565"/>
    </ligand>
</feature>
<sequence length="646" mass="71329">MSWSLRVDKPDTGESPFKHSLVTGAQEIPISSFADKTFTAPAQIRNFCIIAHIDHGKSTLADRMLQLTGVVDERSMRAQYLDRMDIERERGITIKAQNVRLSWSVTAGGTTENYVLHLIDTPGHVDFTYEVSRALEACEGAVLLVDAVQGIEAQTLANLYLALERDLTIIPVLNKIDLPAADPDRYAAEIAHIIGYESGDVLRVSGKTGEGVSDLLDEVVRRVPHPQGDPDAPTRAMIFDSVYDIYRGVVTYVRVVDGKISPRERIAMMSTGATYELLEVGIVSPEPKASAGLGVGEVGYLITGVKDVRQSKVGDTVTTVRYGATEPLTGYREPKPMVYSGLYPVDSSDYPSLRDALGKLQLNDAALTYEPETSVALGVGYRCGFLGLLHIDITRERLEREFDLDLISTSPNVVYRVVTEDNTEIVVTNPSDWPEGKIRTVYEPVVKITIIAPSEFIGTIMELCQSRRGELGGMDYLSPERVELRYIMPLGEIIFDFFDSLKSRTRGYASLDYEEAGEQEAQLVKVDILLQGEAVDAFSAIVHKDSASAYGNKMTNKLKELIPRQQFEVPVQAAIGSKVIARENIRAIRKDVLSKCYGGDITRKRKLLEKQKEGKKRMKTIGRVEVPQEAFVAALSADAAGDKDKK</sequence>
<accession>B8ZUS2</accession>
<keyword id="KW-1003">Cell membrane</keyword>
<keyword id="KW-0342">GTP-binding</keyword>
<keyword id="KW-0378">Hydrolase</keyword>
<keyword id="KW-0472">Membrane</keyword>
<keyword id="KW-0547">Nucleotide-binding</keyword>
<keyword id="KW-0648">Protein biosynthesis</keyword>
<organism>
    <name type="scientific">Mycobacterium leprae (strain Br4923)</name>
    <dbReference type="NCBI Taxonomy" id="561304"/>
    <lineage>
        <taxon>Bacteria</taxon>
        <taxon>Bacillati</taxon>
        <taxon>Actinomycetota</taxon>
        <taxon>Actinomycetes</taxon>
        <taxon>Mycobacteriales</taxon>
        <taxon>Mycobacteriaceae</taxon>
        <taxon>Mycobacterium</taxon>
    </lineage>
</organism>
<reference key="1">
    <citation type="journal article" date="2009" name="Nat. Genet.">
        <title>Comparative genomic and phylogeographic analysis of Mycobacterium leprae.</title>
        <authorList>
            <person name="Monot M."/>
            <person name="Honore N."/>
            <person name="Garnier T."/>
            <person name="Zidane N."/>
            <person name="Sherafi D."/>
            <person name="Paniz-Mondolfi A."/>
            <person name="Matsuoka M."/>
            <person name="Taylor G.M."/>
            <person name="Donoghue H.D."/>
            <person name="Bouwman A."/>
            <person name="Mays S."/>
            <person name="Watson C."/>
            <person name="Lockwood D."/>
            <person name="Khamispour A."/>
            <person name="Dowlati Y."/>
            <person name="Jianping S."/>
            <person name="Rea T.H."/>
            <person name="Vera-Cabrera L."/>
            <person name="Stefani M.M."/>
            <person name="Banu S."/>
            <person name="Macdonald M."/>
            <person name="Sapkota B.R."/>
            <person name="Spencer J.S."/>
            <person name="Thomas J."/>
            <person name="Harshman K."/>
            <person name="Singh P."/>
            <person name="Busso P."/>
            <person name="Gattiker A."/>
            <person name="Rougemont J."/>
            <person name="Brennan P.J."/>
            <person name="Cole S.T."/>
        </authorList>
    </citation>
    <scope>NUCLEOTIDE SEQUENCE [LARGE SCALE GENOMIC DNA]</scope>
    <source>
        <strain>Br4923</strain>
    </source>
</reference>
<comment type="function">
    <text evidence="1">Required for accurate and efficient protein synthesis under certain stress conditions. May act as a fidelity factor of the translation reaction, by catalyzing a one-codon backward translocation of tRNAs on improperly translocated ribosomes. Back-translocation proceeds from a post-translocation (POST) complex to a pre-translocation (PRE) complex, thus giving elongation factor G a second chance to translocate the tRNAs correctly. Binds to ribosomes in a GTP-dependent manner.</text>
</comment>
<comment type="catalytic activity">
    <reaction evidence="1">
        <text>GTP + H2O = GDP + phosphate + H(+)</text>
        <dbReference type="Rhea" id="RHEA:19669"/>
        <dbReference type="ChEBI" id="CHEBI:15377"/>
        <dbReference type="ChEBI" id="CHEBI:15378"/>
        <dbReference type="ChEBI" id="CHEBI:37565"/>
        <dbReference type="ChEBI" id="CHEBI:43474"/>
        <dbReference type="ChEBI" id="CHEBI:58189"/>
        <dbReference type="EC" id="3.6.5.n1"/>
    </reaction>
</comment>
<comment type="subcellular location">
    <subcellularLocation>
        <location evidence="1">Cell membrane</location>
        <topology evidence="1">Peripheral membrane protein</topology>
        <orientation evidence="1">Cytoplasmic side</orientation>
    </subcellularLocation>
</comment>
<comment type="similarity">
    <text evidence="1">Belongs to the TRAFAC class translation factor GTPase superfamily. Classic translation factor GTPase family. LepA subfamily.</text>
</comment>
<gene>
    <name evidence="1" type="primary">lepA</name>
    <name type="ordered locus">MLBr00611</name>
</gene>
<dbReference type="EC" id="3.6.5.n1" evidence="1"/>
<dbReference type="EMBL" id="FM211192">
    <property type="protein sequence ID" value="CAR70704.1"/>
    <property type="molecule type" value="Genomic_DNA"/>
</dbReference>
<dbReference type="SMR" id="B8ZUS2"/>
<dbReference type="KEGG" id="mlb:MLBr00611"/>
<dbReference type="HOGENOM" id="CLU_009995_3_3_11"/>
<dbReference type="Proteomes" id="UP000006900">
    <property type="component" value="Chromosome"/>
</dbReference>
<dbReference type="GO" id="GO:0005886">
    <property type="term" value="C:plasma membrane"/>
    <property type="evidence" value="ECO:0007669"/>
    <property type="project" value="UniProtKB-SubCell"/>
</dbReference>
<dbReference type="GO" id="GO:0005525">
    <property type="term" value="F:GTP binding"/>
    <property type="evidence" value="ECO:0007669"/>
    <property type="project" value="UniProtKB-UniRule"/>
</dbReference>
<dbReference type="GO" id="GO:0003924">
    <property type="term" value="F:GTPase activity"/>
    <property type="evidence" value="ECO:0007669"/>
    <property type="project" value="UniProtKB-UniRule"/>
</dbReference>
<dbReference type="GO" id="GO:0043022">
    <property type="term" value="F:ribosome binding"/>
    <property type="evidence" value="ECO:0007669"/>
    <property type="project" value="UniProtKB-UniRule"/>
</dbReference>
<dbReference type="GO" id="GO:0003746">
    <property type="term" value="F:translation elongation factor activity"/>
    <property type="evidence" value="ECO:0007669"/>
    <property type="project" value="UniProtKB-UniRule"/>
</dbReference>
<dbReference type="GO" id="GO:0045727">
    <property type="term" value="P:positive regulation of translation"/>
    <property type="evidence" value="ECO:0007669"/>
    <property type="project" value="UniProtKB-UniRule"/>
</dbReference>
<dbReference type="CDD" id="cd03699">
    <property type="entry name" value="EF4_II"/>
    <property type="match status" value="1"/>
</dbReference>
<dbReference type="CDD" id="cd16260">
    <property type="entry name" value="EF4_III"/>
    <property type="match status" value="1"/>
</dbReference>
<dbReference type="CDD" id="cd01890">
    <property type="entry name" value="LepA"/>
    <property type="match status" value="1"/>
</dbReference>
<dbReference type="CDD" id="cd03709">
    <property type="entry name" value="lepA_C"/>
    <property type="match status" value="1"/>
</dbReference>
<dbReference type="FunFam" id="3.30.70.240:FF:000011">
    <property type="entry name" value="Elongation factor 4"/>
    <property type="match status" value="1"/>
</dbReference>
<dbReference type="FunFam" id="3.40.50.300:FF:000078">
    <property type="entry name" value="Elongation factor 4"/>
    <property type="match status" value="1"/>
</dbReference>
<dbReference type="FunFam" id="2.40.30.10:FF:000015">
    <property type="entry name" value="Translation factor GUF1, mitochondrial"/>
    <property type="match status" value="1"/>
</dbReference>
<dbReference type="FunFam" id="3.30.70.2570:FF:000001">
    <property type="entry name" value="Translation factor GUF1, mitochondrial"/>
    <property type="match status" value="1"/>
</dbReference>
<dbReference type="FunFam" id="3.30.70.870:FF:000004">
    <property type="entry name" value="Translation factor GUF1, mitochondrial"/>
    <property type="match status" value="1"/>
</dbReference>
<dbReference type="Gene3D" id="3.30.70.240">
    <property type="match status" value="1"/>
</dbReference>
<dbReference type="Gene3D" id="3.30.70.2570">
    <property type="entry name" value="Elongation factor 4, C-terminal domain"/>
    <property type="match status" value="1"/>
</dbReference>
<dbReference type="Gene3D" id="3.30.70.870">
    <property type="entry name" value="Elongation Factor G (Translational Gtpase), domain 3"/>
    <property type="match status" value="1"/>
</dbReference>
<dbReference type="Gene3D" id="3.40.50.300">
    <property type="entry name" value="P-loop containing nucleotide triphosphate hydrolases"/>
    <property type="match status" value="1"/>
</dbReference>
<dbReference type="Gene3D" id="2.40.30.10">
    <property type="entry name" value="Translation factors"/>
    <property type="match status" value="1"/>
</dbReference>
<dbReference type="HAMAP" id="MF_00071">
    <property type="entry name" value="LepA"/>
    <property type="match status" value="1"/>
</dbReference>
<dbReference type="InterPro" id="IPR006297">
    <property type="entry name" value="EF-4"/>
</dbReference>
<dbReference type="InterPro" id="IPR035647">
    <property type="entry name" value="EFG_III/V"/>
</dbReference>
<dbReference type="InterPro" id="IPR000640">
    <property type="entry name" value="EFG_V-like"/>
</dbReference>
<dbReference type="InterPro" id="IPR031157">
    <property type="entry name" value="G_TR_CS"/>
</dbReference>
<dbReference type="InterPro" id="IPR038363">
    <property type="entry name" value="LepA_C_sf"/>
</dbReference>
<dbReference type="InterPro" id="IPR013842">
    <property type="entry name" value="LepA_CTD"/>
</dbReference>
<dbReference type="InterPro" id="IPR035654">
    <property type="entry name" value="LepA_IV"/>
</dbReference>
<dbReference type="InterPro" id="IPR027417">
    <property type="entry name" value="P-loop_NTPase"/>
</dbReference>
<dbReference type="InterPro" id="IPR005225">
    <property type="entry name" value="Small_GTP-bd"/>
</dbReference>
<dbReference type="InterPro" id="IPR000795">
    <property type="entry name" value="T_Tr_GTP-bd_dom"/>
</dbReference>
<dbReference type="InterPro" id="IPR009000">
    <property type="entry name" value="Transl_B-barrel_sf"/>
</dbReference>
<dbReference type="NCBIfam" id="TIGR01393">
    <property type="entry name" value="lepA"/>
    <property type="match status" value="1"/>
</dbReference>
<dbReference type="NCBIfam" id="TIGR00231">
    <property type="entry name" value="small_GTP"/>
    <property type="match status" value="1"/>
</dbReference>
<dbReference type="PANTHER" id="PTHR43512:SF4">
    <property type="entry name" value="TRANSLATION FACTOR GUF1 HOMOLOG, CHLOROPLASTIC"/>
    <property type="match status" value="1"/>
</dbReference>
<dbReference type="PANTHER" id="PTHR43512">
    <property type="entry name" value="TRANSLATION FACTOR GUF1-RELATED"/>
    <property type="match status" value="1"/>
</dbReference>
<dbReference type="Pfam" id="PF00679">
    <property type="entry name" value="EFG_C"/>
    <property type="match status" value="1"/>
</dbReference>
<dbReference type="Pfam" id="PF00009">
    <property type="entry name" value="GTP_EFTU"/>
    <property type="match status" value="1"/>
</dbReference>
<dbReference type="Pfam" id="PF06421">
    <property type="entry name" value="LepA_C"/>
    <property type="match status" value="1"/>
</dbReference>
<dbReference type="PRINTS" id="PR00315">
    <property type="entry name" value="ELONGATNFCT"/>
</dbReference>
<dbReference type="SMART" id="SM00838">
    <property type="entry name" value="EFG_C"/>
    <property type="match status" value="1"/>
</dbReference>
<dbReference type="SUPFAM" id="SSF54980">
    <property type="entry name" value="EF-G C-terminal domain-like"/>
    <property type="match status" value="2"/>
</dbReference>
<dbReference type="SUPFAM" id="SSF52540">
    <property type="entry name" value="P-loop containing nucleoside triphosphate hydrolases"/>
    <property type="match status" value="1"/>
</dbReference>
<dbReference type="SUPFAM" id="SSF50447">
    <property type="entry name" value="Translation proteins"/>
    <property type="match status" value="1"/>
</dbReference>
<dbReference type="PROSITE" id="PS00301">
    <property type="entry name" value="G_TR_1"/>
    <property type="match status" value="1"/>
</dbReference>
<dbReference type="PROSITE" id="PS51722">
    <property type="entry name" value="G_TR_2"/>
    <property type="match status" value="1"/>
</dbReference>
<protein>
    <recommendedName>
        <fullName evidence="1">Elongation factor 4</fullName>
        <shortName evidence="1">EF-4</shortName>
        <ecNumber evidence="1">3.6.5.n1</ecNumber>
    </recommendedName>
    <alternativeName>
        <fullName evidence="1">Ribosomal back-translocase LepA</fullName>
    </alternativeName>
</protein>
<proteinExistence type="inferred from homology"/>
<name>LEPA_MYCLB</name>
<evidence type="ECO:0000255" key="1">
    <source>
        <dbReference type="HAMAP-Rule" id="MF_00071"/>
    </source>
</evidence>